<name>LIDS_PYRO7</name>
<organism>
    <name type="scientific">Pyricularia oryzae (strain 70-15 / ATCC MYA-4617 / FGSC 8958)</name>
    <name type="common">Rice blast fungus</name>
    <name type="synonym">Magnaporthe oryzae</name>
    <dbReference type="NCBI Taxonomy" id="242507"/>
    <lineage>
        <taxon>Eukaryota</taxon>
        <taxon>Fungi</taxon>
        <taxon>Dikarya</taxon>
        <taxon>Ascomycota</taxon>
        <taxon>Pezizomycotina</taxon>
        <taxon>Sordariomycetes</taxon>
        <taxon>Sordariomycetidae</taxon>
        <taxon>Magnaporthales</taxon>
        <taxon>Pyriculariaceae</taxon>
        <taxon>Pyricularia</taxon>
    </lineage>
</organism>
<gene>
    <name type="ORF">MGG_13239</name>
</gene>
<feature type="chain" id="PRO_0000458149" description="7,8-linoleate diol synthase">
    <location>
        <begin position="1"/>
        <end position="1171"/>
    </location>
</feature>
<feature type="region of interest" description="Disordered" evidence="5">
    <location>
        <begin position="1"/>
        <end position="56"/>
    </location>
</feature>
<feature type="region of interest" description="Fatty acid alpha-dioxygenase" evidence="9">
    <location>
        <begin position="114"/>
        <end position="457"/>
    </location>
</feature>
<feature type="region of interest" description="Epoxy alcohol synthase" evidence="9">
    <location>
        <begin position="675"/>
        <end position="1171"/>
    </location>
</feature>
<feature type="region of interest" description="Disordered" evidence="5">
    <location>
        <begin position="873"/>
        <end position="900"/>
    </location>
</feature>
<feature type="compositionally biased region" description="Low complexity" evidence="5">
    <location>
        <begin position="1"/>
        <end position="22"/>
    </location>
</feature>
<feature type="compositionally biased region" description="Low complexity" evidence="5">
    <location>
        <begin position="881"/>
        <end position="895"/>
    </location>
</feature>
<feature type="active site" evidence="3">
    <location>
        <position position="385"/>
    </location>
</feature>
<feature type="binding site" description="axial binding residue" evidence="4">
    <location>
        <position position="213"/>
    </location>
    <ligand>
        <name>heme b</name>
        <dbReference type="ChEBI" id="CHEBI:60344"/>
    </ligand>
    <ligandPart>
        <name>Fe</name>
        <dbReference type="ChEBI" id="CHEBI:18248"/>
    </ligandPart>
</feature>
<feature type="binding site" evidence="4">
    <location>
        <position position="214"/>
    </location>
    <ligand>
        <name>Ca(2+)</name>
        <dbReference type="ChEBI" id="CHEBI:29108"/>
    </ligand>
</feature>
<feature type="binding site" evidence="4">
    <location>
        <position position="229"/>
    </location>
    <ligand>
        <name>Ca(2+)</name>
        <dbReference type="ChEBI" id="CHEBI:29108"/>
    </ligand>
</feature>
<feature type="binding site" evidence="4">
    <location>
        <position position="231"/>
    </location>
    <ligand>
        <name>Ca(2+)</name>
        <dbReference type="ChEBI" id="CHEBI:29108"/>
    </ligand>
</feature>
<feature type="binding site" evidence="4">
    <location>
        <position position="233"/>
    </location>
    <ligand>
        <name>Ca(2+)</name>
        <dbReference type="ChEBI" id="CHEBI:29108"/>
    </ligand>
</feature>
<feature type="binding site" evidence="4">
    <location>
        <position position="235"/>
    </location>
    <ligand>
        <name>Ca(2+)</name>
        <dbReference type="ChEBI" id="CHEBI:29108"/>
    </ligand>
</feature>
<feature type="binding site" description="axial binding residue" evidence="4">
    <location>
        <position position="388"/>
    </location>
    <ligand>
        <name>heme b</name>
        <dbReference type="ChEBI" id="CHEBI:60344"/>
    </ligand>
    <ligandPart>
        <name>Fe</name>
        <dbReference type="ChEBI" id="CHEBI:18248"/>
    </ligandPart>
</feature>
<feature type="binding site" description="axial binding residue" evidence="1">
    <location>
        <position position="1089"/>
    </location>
    <ligand>
        <name>heme</name>
        <dbReference type="ChEBI" id="CHEBI:30413"/>
    </ligand>
    <ligandPart>
        <name>Fe</name>
        <dbReference type="ChEBI" id="CHEBI:18248"/>
    </ligandPart>
</feature>
<feature type="mutagenesis site" description="Does not affect the enzymatic oxidation of linoleic acid (18:2n-6)." evidence="7">
    <original>S</original>
    <variation>D</variation>
    <location>
        <position position="350"/>
    </location>
</feature>
<feature type="mutagenesis site" description="Does not affect the enzymatic oxidation of linoleic acid (18:2n-6)." evidence="7">
    <original>S</original>
    <variation>E</variation>
    <location>
        <position position="753"/>
    </location>
</feature>
<feature type="mutagenesis site" description="Forms only small amounts of the 7,8-diol." evidence="7">
    <original>N</original>
    <variation>V</variation>
    <location>
        <position position="946"/>
    </location>
</feature>
<feature type="mutagenesis site" description="Does not affect the enzymatic oxidation of linoleic acid (18:2n-6)." evidence="7">
    <original>S</original>
    <variation>D</variation>
    <location>
        <position position="975"/>
    </location>
</feature>
<feature type="mutagenesis site" description="Does not affect the enzymatic oxidation of linoleic acid (18:2n-6)." evidence="7">
    <original>T</original>
    <variation>E</variation>
    <location>
        <position position="998"/>
    </location>
</feature>
<feature type="mutagenesis site" description="Does not affect the enzymatic oxidation of linoleic acid (18:2n-6)." evidence="7">
    <original>T</original>
    <variation>D</variation>
    <location>
        <position position="1098"/>
    </location>
</feature>
<sequence length="1171" mass="129879">MASSSSSGSSTRSSSPSDPPSSFFQKLGAFLGLFSKPQPPRPDYPHAPGNSAREEQTDITEDIQKLGFKDVETLLLYLNSSVKGVNDDKQLLLERLIQLLSKLPPTSTNGKKVTDGLITGLWESLDHPPVSSLGEKYRFREADGSNNNIHNPTLGVAGSHYARSAKPMVYQNPNPPAPETIFDTLMARDPAKFRPHPNQISSVLFYFATIITHDIFQTSSRDPSINLTSSYLDLSPLYGRNLEEQLSVRAMKDGLLKPDTFCSKRVHGFPPGVGVLLIMFNRFHNYVVTSLAKINEGNRFKKPVGDDTAAWEKYDNDLFQTGRLITCGLYVNIVLVDYVRTILNLNRVDSSWILDPRTEEGKSLLSKPTPEAVGNQVSVEFNLIYRWHCGMSQRDDKWTTDMLTEALGGKDPATATLPEFFGALGRFESSFPNEPEKRTLAGLKRQEDGSFEDEGLIKIMQESIEEVAGAFGPNHVPACMRAIEILGMNQARSWNVATLNEFREFIGLKRYDTFEDINPDPKVANLLAEFYGSPDAVELYPGINAEAPKPVIVPGSGLCPPSTTGRAILSDAVTLVRGDRFFTVDYTPRNLTNFGYQEAATDKSVDNGNVIYKLFFRAFPNHYAQNSIYAHFPFVIPSENKKIMESLGLADKYSWQPPQRKPATQMIRSHAAAVKILNNQKDFKVVWGESIGFLTKFPTGENPGLGFALAGDAPANQQSRDQLMKCIFSPKAWEDEVRQFCEATTWDLLRRYSAKVQDKGPHLKVHTHEIDVIRDVISLANARFFAAVYSLPLKTENGDDGVYSDHEMYRSLMLIFSAIFWDNDVSKSFKLRRDARAATQKLGALVEKHIVEMGSLFHSFKHSHSAVSDKTNGLANGGANGHANGNANGHTNGNGIHQNGGAAPSMLRSYGDLMLRRMIEAYGEGKSVKEAVYGQIMPSIAAGTANQTQIMAQCLDYYMSDDGAEHLPEMKRLASLETPEAFNTLMKYLFEGARIRNTTAVPRLVATDQTVEDNIPCLPDPKDSTFLRPIPNPQQAETTRTVKLSRGSMVLVDLTVAAHDATAFPDPEKVRLDRDLDSYTFFGLGPHRCAGDKVVRITMTAVFKVLLQLDGLRRAEGGRGVFKSLPASQWNGQAGRVAGEKPQWSGLRTYVNADESAFSQTPMNMKIRWDD</sequence>
<proteinExistence type="evidence at protein level"/>
<evidence type="ECO:0000250" key="1">
    <source>
        <dbReference type="UniProtKB" id="P04798"/>
    </source>
</evidence>
<evidence type="ECO:0000250" key="2">
    <source>
        <dbReference type="UniProtKB" id="Q9UUS2"/>
    </source>
</evidence>
<evidence type="ECO:0000255" key="3"/>
<evidence type="ECO:0000255" key="4">
    <source>
        <dbReference type="PROSITE-ProRule" id="PRU00298"/>
    </source>
</evidence>
<evidence type="ECO:0000256" key="5">
    <source>
        <dbReference type="SAM" id="MobiDB-lite"/>
    </source>
</evidence>
<evidence type="ECO:0000269" key="6">
    <source>
    </source>
</evidence>
<evidence type="ECO:0000269" key="7">
    <source>
    </source>
</evidence>
<evidence type="ECO:0000303" key="8">
    <source>
    </source>
</evidence>
<evidence type="ECO:0000303" key="9">
    <source>
    </source>
</evidence>
<evidence type="ECO:0000305" key="10"/>
<protein>
    <recommendedName>
        <fullName evidence="8">7,8-linoleate diol synthase</fullName>
        <shortName evidence="8">LDS</shortName>
    </recommendedName>
    <domain>
        <recommendedName>
            <fullName evidence="9">Linoleate 8R-lipoxygenase</fullName>
            <ecNumber evidence="6 7">1.13.11.60</ecNumber>
        </recommendedName>
    </domain>
    <domain>
        <recommendedName>
            <fullName evidence="9">9,12-octadecadienoate 8-hydroperoxide 8R-isomerase</fullName>
            <ecNumber evidence="6 7">5.4.4.6</ecNumber>
        </recommendedName>
    </domain>
</protein>
<reference key="1">
    <citation type="journal article" date="2005" name="Nature">
        <title>The genome sequence of the rice blast fungus Magnaporthe grisea.</title>
        <authorList>
            <person name="Dean R.A."/>
            <person name="Talbot N.J."/>
            <person name="Ebbole D.J."/>
            <person name="Farman M.L."/>
            <person name="Mitchell T.K."/>
            <person name="Orbach M.J."/>
            <person name="Thon M.R."/>
            <person name="Kulkarni R."/>
            <person name="Xu J.-R."/>
            <person name="Pan H."/>
            <person name="Read N.D."/>
            <person name="Lee Y.-H."/>
            <person name="Carbone I."/>
            <person name="Brown D."/>
            <person name="Oh Y.Y."/>
            <person name="Donofrio N."/>
            <person name="Jeong J.S."/>
            <person name="Soanes D.M."/>
            <person name="Djonovic S."/>
            <person name="Kolomiets E."/>
            <person name="Rehmeyer C."/>
            <person name="Li W."/>
            <person name="Harding M."/>
            <person name="Kim S."/>
            <person name="Lebrun M.-H."/>
            <person name="Bohnert H."/>
            <person name="Coughlan S."/>
            <person name="Butler J."/>
            <person name="Calvo S.E."/>
            <person name="Ma L.-J."/>
            <person name="Nicol R."/>
            <person name="Purcell S."/>
            <person name="Nusbaum C."/>
            <person name="Galagan J.E."/>
            <person name="Birren B.W."/>
        </authorList>
    </citation>
    <scope>NUCLEOTIDE SEQUENCE [LARGE SCALE GENOMIC DNA]</scope>
    <source>
        <strain>70-15 / ATCC MYA-4617 / FGSC 8958</strain>
    </source>
</reference>
<reference key="2">
    <citation type="journal article" date="2010" name="J. Biol. Chem.">
        <title>Gene deletion of 7,8-linoleate diol synthase of the rice blast fungus: studies on pathogenicity, stereochemistry, and oxygenation mechanisms.</title>
        <authorList>
            <person name="Jerneren F."/>
            <person name="Sesma A."/>
            <person name="Franceschetti M."/>
            <person name="Hamberg M."/>
            <person name="Oliw E.H."/>
        </authorList>
    </citation>
    <scope>FUNCTION</scope>
    <scope>DISRUPTION PHENOTYPE</scope>
    <scope>CATALYTIC ACTIVITY</scope>
</reference>
<reference key="3">
    <citation type="journal article" date="2014" name="J. Lipid Res.">
        <title>Epoxy alcohol synthase of the rice blast fungus represents a novel subfamily of dioxygenase-cytochrome P450 fusion enzymes.</title>
        <authorList>
            <person name="Hoffmann I."/>
            <person name="Jerneren F."/>
            <person name="Oliw E.H."/>
        </authorList>
    </citation>
    <scope>FUNCTION</scope>
    <scope>DOMAIN</scope>
    <scope>CATALYTIC ACTIVITY</scope>
    <scope>MUTAGENESIS OF SER-350; SER-753; ASN-946; SER-975; THR-998 AND THR-1098</scope>
</reference>
<accession>G4N4J5</accession>
<dbReference type="EC" id="1.13.11.60" evidence="6 7"/>
<dbReference type="EC" id="5.4.4.6" evidence="6 7"/>
<dbReference type="EMBL" id="CM001233">
    <property type="protein sequence ID" value="EHA52010.1"/>
    <property type="molecule type" value="Genomic_DNA"/>
</dbReference>
<dbReference type="RefSeq" id="XP_003711817.1">
    <property type="nucleotide sequence ID" value="XM_003711769.1"/>
</dbReference>
<dbReference type="SMR" id="G4N4J5"/>
<dbReference type="STRING" id="242507.G4N4J5"/>
<dbReference type="EnsemblFungi" id="MGG_13239T0">
    <property type="protein sequence ID" value="MGG_13239T0"/>
    <property type="gene ID" value="MGG_13239"/>
</dbReference>
<dbReference type="GeneID" id="5049104"/>
<dbReference type="KEGG" id="mgr:MGG_13239"/>
<dbReference type="VEuPathDB" id="FungiDB:MGG_13239"/>
<dbReference type="eggNOG" id="KOG2408">
    <property type="taxonomic scope" value="Eukaryota"/>
</dbReference>
<dbReference type="HOGENOM" id="CLU_002329_1_0_1"/>
<dbReference type="InParanoid" id="G4N4J5"/>
<dbReference type="OMA" id="KIQWDGD"/>
<dbReference type="OrthoDB" id="823504at2759"/>
<dbReference type="PHI-base" id="PHI:2148"/>
<dbReference type="Proteomes" id="UP000009058">
    <property type="component" value="Chromosome 3"/>
</dbReference>
<dbReference type="GO" id="GO:0051213">
    <property type="term" value="F:dioxygenase activity"/>
    <property type="evidence" value="ECO:0007669"/>
    <property type="project" value="UniProtKB-KW"/>
</dbReference>
<dbReference type="GO" id="GO:0020037">
    <property type="term" value="F:heme binding"/>
    <property type="evidence" value="ECO:0007669"/>
    <property type="project" value="InterPro"/>
</dbReference>
<dbReference type="GO" id="GO:0005506">
    <property type="term" value="F:iron ion binding"/>
    <property type="evidence" value="ECO:0007669"/>
    <property type="project" value="InterPro"/>
</dbReference>
<dbReference type="GO" id="GO:0016853">
    <property type="term" value="F:isomerase activity"/>
    <property type="evidence" value="ECO:0007669"/>
    <property type="project" value="UniProtKB-KW"/>
</dbReference>
<dbReference type="GO" id="GO:0004497">
    <property type="term" value="F:monooxygenase activity"/>
    <property type="evidence" value="ECO:0007669"/>
    <property type="project" value="InterPro"/>
</dbReference>
<dbReference type="GO" id="GO:0016705">
    <property type="term" value="F:oxidoreductase activity, acting on paired donors, with incorporation or reduction of molecular oxygen"/>
    <property type="evidence" value="ECO:0007669"/>
    <property type="project" value="InterPro"/>
</dbReference>
<dbReference type="GO" id="GO:0004601">
    <property type="term" value="F:peroxidase activity"/>
    <property type="evidence" value="ECO:0007669"/>
    <property type="project" value="InterPro"/>
</dbReference>
<dbReference type="GO" id="GO:0006631">
    <property type="term" value="P:fatty acid metabolic process"/>
    <property type="evidence" value="ECO:0007669"/>
    <property type="project" value="UniProtKB-ARBA"/>
</dbReference>
<dbReference type="GO" id="GO:0006979">
    <property type="term" value="P:response to oxidative stress"/>
    <property type="evidence" value="ECO:0007669"/>
    <property type="project" value="InterPro"/>
</dbReference>
<dbReference type="CDD" id="cd20612">
    <property type="entry name" value="CYP_LDS-like_C"/>
    <property type="match status" value="1"/>
</dbReference>
<dbReference type="CDD" id="cd09817">
    <property type="entry name" value="linoleate_diol_synthase_like"/>
    <property type="match status" value="1"/>
</dbReference>
<dbReference type="Gene3D" id="1.10.630.10">
    <property type="entry name" value="Cytochrome P450"/>
    <property type="match status" value="1"/>
</dbReference>
<dbReference type="Gene3D" id="1.10.640.10">
    <property type="entry name" value="Haem peroxidase domain superfamily, animal type"/>
    <property type="match status" value="1"/>
</dbReference>
<dbReference type="InterPro" id="IPR017972">
    <property type="entry name" value="Cyt_P450_CS"/>
</dbReference>
<dbReference type="InterPro" id="IPR036396">
    <property type="entry name" value="Cyt_P450_sf"/>
</dbReference>
<dbReference type="InterPro" id="IPR019791">
    <property type="entry name" value="Haem_peroxidase_animal"/>
</dbReference>
<dbReference type="InterPro" id="IPR010255">
    <property type="entry name" value="Haem_peroxidase_sf"/>
</dbReference>
<dbReference type="InterPro" id="IPR037120">
    <property type="entry name" value="Haem_peroxidase_sf_animal"/>
</dbReference>
<dbReference type="InterPro" id="IPR050783">
    <property type="entry name" value="Oxylipin_biosynth_metab"/>
</dbReference>
<dbReference type="InterPro" id="IPR034812">
    <property type="entry name" value="Ppo-like_N"/>
</dbReference>
<dbReference type="PANTHER" id="PTHR11903">
    <property type="entry name" value="PROSTAGLANDIN G/H SYNTHASE"/>
    <property type="match status" value="1"/>
</dbReference>
<dbReference type="PANTHER" id="PTHR11903:SF37">
    <property type="entry name" value="PSI-PRODUCING OXYGENASE A"/>
    <property type="match status" value="1"/>
</dbReference>
<dbReference type="Pfam" id="PF03098">
    <property type="entry name" value="An_peroxidase"/>
    <property type="match status" value="2"/>
</dbReference>
<dbReference type="SUPFAM" id="SSF48264">
    <property type="entry name" value="Cytochrome P450"/>
    <property type="match status" value="1"/>
</dbReference>
<dbReference type="SUPFAM" id="SSF48113">
    <property type="entry name" value="Heme-dependent peroxidases"/>
    <property type="match status" value="1"/>
</dbReference>
<dbReference type="PROSITE" id="PS00086">
    <property type="entry name" value="CYTOCHROME_P450"/>
    <property type="match status" value="1"/>
</dbReference>
<dbReference type="PROSITE" id="PS50292">
    <property type="entry name" value="PEROXIDASE_3"/>
    <property type="match status" value="1"/>
</dbReference>
<comment type="function">
    <text evidence="6 7">7,8-linoleate diol synthase is a bifunctional enzyme that converts linoleic acid (18:2n-6) into 8-hydroperoxy-8(E),12(Z)-octadecadienoic acid (8-HPODE) and then catalyzes the isomerization of the resulting hydroperoxide to 7,8-dihydroxy-9(Z),12(Z)-octadecadienoic acid (7,8-DiHODE).</text>
</comment>
<comment type="catalytic activity">
    <reaction evidence="6 7">
        <text>(9Z,12Z)-octadecadienoate + O2 = (8R,9Z,12Z)-8-hydroperoxyoctadeca-9,12-dienoate</text>
        <dbReference type="Rhea" id="RHEA:25395"/>
        <dbReference type="ChEBI" id="CHEBI:15379"/>
        <dbReference type="ChEBI" id="CHEBI:30245"/>
        <dbReference type="ChEBI" id="CHEBI:58659"/>
        <dbReference type="EC" id="1.13.11.60"/>
    </reaction>
    <physiologicalReaction direction="left-to-right" evidence="6 7">
        <dbReference type="Rhea" id="RHEA:25396"/>
    </physiologicalReaction>
</comment>
<comment type="catalytic activity">
    <reaction evidence="6 7">
        <text>(8R,9Z,12Z)-8-hydroperoxyoctadeca-9,12-dienoate = (7S,8S,9Z,12Z)-7,8-dihydroxyoctadeca-9,12-dienoate</text>
        <dbReference type="Rhea" id="RHEA:25399"/>
        <dbReference type="ChEBI" id="CHEBI:57468"/>
        <dbReference type="ChEBI" id="CHEBI:58659"/>
        <dbReference type="EC" id="5.4.4.6"/>
    </reaction>
    <physiologicalReaction direction="left-to-right" evidence="6 7">
        <dbReference type="Rhea" id="RHEA:25400"/>
    </physiologicalReaction>
</comment>
<comment type="cofactor">
    <cofactor evidence="4">
        <name>heme b</name>
        <dbReference type="ChEBI" id="CHEBI:60344"/>
    </cofactor>
</comment>
<comment type="cofactor">
    <cofactor evidence="4">
        <name>Ca(2+)</name>
        <dbReference type="ChEBI" id="CHEBI:29108"/>
    </cofactor>
</comment>
<comment type="cofactor">
    <cofactor evidence="1">
        <name>heme</name>
        <dbReference type="ChEBI" id="CHEBI:30413"/>
    </cofactor>
</comment>
<comment type="subunit">
    <text evidence="2">Homotetramer.</text>
</comment>
<comment type="disruption phenotype">
    <text evidence="6">Impairs the production of 8-hydroperoxy-8(E),12(Z)-octadecadienoic acid (8-HPODE) and 7,8-dihydroxy-9(Z),12(Z)-octadecadienoic acid (7,8-DiHODE) (PubMed:20023302). Does not affect appressoria and conidia formation, nor the infection of rice leaves and roots (PubMed:20023302).</text>
</comment>
<comment type="similarity">
    <text evidence="4">In the N-terminal section; belongs to the peroxidase family.</text>
</comment>
<comment type="similarity">
    <text evidence="10">In the C-terminal section; belongs to the cytochrome P450 family.</text>
</comment>
<keyword id="KW-0106">Calcium</keyword>
<keyword id="KW-0223">Dioxygenase</keyword>
<keyword id="KW-0349">Heme</keyword>
<keyword id="KW-0408">Iron</keyword>
<keyword id="KW-0413">Isomerase</keyword>
<keyword id="KW-0479">Metal-binding</keyword>
<keyword id="KW-0560">Oxidoreductase</keyword>
<keyword id="KW-1185">Reference proteome</keyword>